<dbReference type="EC" id="2.7.8.13" evidence="1"/>
<dbReference type="EMBL" id="CP000264">
    <property type="protein sequence ID" value="ABD55681.1"/>
    <property type="molecule type" value="Genomic_DNA"/>
</dbReference>
<dbReference type="RefSeq" id="WP_011455885.1">
    <property type="nucleotide sequence ID" value="NC_007802.1"/>
</dbReference>
<dbReference type="SMR" id="Q28NN1"/>
<dbReference type="STRING" id="290400.Jann_2764"/>
<dbReference type="KEGG" id="jan:Jann_2764"/>
<dbReference type="eggNOG" id="COG0472">
    <property type="taxonomic scope" value="Bacteria"/>
</dbReference>
<dbReference type="HOGENOM" id="CLU_023982_0_0_5"/>
<dbReference type="OrthoDB" id="9805475at2"/>
<dbReference type="UniPathway" id="UPA00219"/>
<dbReference type="Proteomes" id="UP000008326">
    <property type="component" value="Chromosome"/>
</dbReference>
<dbReference type="GO" id="GO:0005886">
    <property type="term" value="C:plasma membrane"/>
    <property type="evidence" value="ECO:0007669"/>
    <property type="project" value="UniProtKB-SubCell"/>
</dbReference>
<dbReference type="GO" id="GO:0046872">
    <property type="term" value="F:metal ion binding"/>
    <property type="evidence" value="ECO:0007669"/>
    <property type="project" value="UniProtKB-KW"/>
</dbReference>
<dbReference type="GO" id="GO:0008963">
    <property type="term" value="F:phospho-N-acetylmuramoyl-pentapeptide-transferase activity"/>
    <property type="evidence" value="ECO:0007669"/>
    <property type="project" value="UniProtKB-UniRule"/>
</dbReference>
<dbReference type="GO" id="GO:0051992">
    <property type="term" value="F:UDP-N-acetylmuramoyl-L-alanyl-D-glutamyl-meso-2,6-diaminopimelyl-D-alanyl-D-alanine:undecaprenyl-phosphate transferase activity"/>
    <property type="evidence" value="ECO:0007669"/>
    <property type="project" value="RHEA"/>
</dbReference>
<dbReference type="GO" id="GO:0051301">
    <property type="term" value="P:cell division"/>
    <property type="evidence" value="ECO:0007669"/>
    <property type="project" value="UniProtKB-KW"/>
</dbReference>
<dbReference type="GO" id="GO:0071555">
    <property type="term" value="P:cell wall organization"/>
    <property type="evidence" value="ECO:0007669"/>
    <property type="project" value="UniProtKB-KW"/>
</dbReference>
<dbReference type="GO" id="GO:0009252">
    <property type="term" value="P:peptidoglycan biosynthetic process"/>
    <property type="evidence" value="ECO:0007669"/>
    <property type="project" value="UniProtKB-UniRule"/>
</dbReference>
<dbReference type="GO" id="GO:0008360">
    <property type="term" value="P:regulation of cell shape"/>
    <property type="evidence" value="ECO:0007669"/>
    <property type="project" value="UniProtKB-KW"/>
</dbReference>
<dbReference type="CDD" id="cd06852">
    <property type="entry name" value="GT_MraY"/>
    <property type="match status" value="1"/>
</dbReference>
<dbReference type="HAMAP" id="MF_00038">
    <property type="entry name" value="MraY"/>
    <property type="match status" value="1"/>
</dbReference>
<dbReference type="InterPro" id="IPR000715">
    <property type="entry name" value="Glycosyl_transferase_4"/>
</dbReference>
<dbReference type="InterPro" id="IPR003524">
    <property type="entry name" value="PNAcMuramoyl-5peptid_Trfase"/>
</dbReference>
<dbReference type="InterPro" id="IPR018480">
    <property type="entry name" value="PNAcMuramoyl-5peptid_Trfase_CS"/>
</dbReference>
<dbReference type="NCBIfam" id="TIGR00445">
    <property type="entry name" value="mraY"/>
    <property type="match status" value="1"/>
</dbReference>
<dbReference type="PANTHER" id="PTHR22926">
    <property type="entry name" value="PHOSPHO-N-ACETYLMURAMOYL-PENTAPEPTIDE-TRANSFERASE"/>
    <property type="match status" value="1"/>
</dbReference>
<dbReference type="PANTHER" id="PTHR22926:SF5">
    <property type="entry name" value="PHOSPHO-N-ACETYLMURAMOYL-PENTAPEPTIDE-TRANSFERASE HOMOLOG"/>
    <property type="match status" value="1"/>
</dbReference>
<dbReference type="Pfam" id="PF00953">
    <property type="entry name" value="Glycos_transf_4"/>
    <property type="match status" value="1"/>
</dbReference>
<dbReference type="Pfam" id="PF10555">
    <property type="entry name" value="MraY_sig1"/>
    <property type="match status" value="1"/>
</dbReference>
<dbReference type="PROSITE" id="PS01347">
    <property type="entry name" value="MRAY_1"/>
    <property type="match status" value="1"/>
</dbReference>
<dbReference type="PROSITE" id="PS01348">
    <property type="entry name" value="MRAY_2"/>
    <property type="match status" value="1"/>
</dbReference>
<sequence length="359" mass="38574">MLYWLNELSDGGDVFNLFRYITFRAGGAFFTALIFGFIFGQPLINALRRKYKDGQPIREVGPAHETKAGTPTMGGLLILAALSLATLLWARLDNPYVWLVLGVTWCFGLIGFADDWAKVSRNSSAGVSGKVRLAIGFVVAFGAALIAAWVHPEELSNQLAMPVFKDVLLNMGWMYVPFVMIVIVGSANAVNLTDGLDGLAIMPVMIAAGTLGVIAYAVGRVDFTDYLDVHYVPGTGELLIFTAGLIGGGLGFLWYNAPPAAVFMGDTGSLALGGALGAIAVCTKHEIVLAIVGGLFVAEAVSVIVQVLYFKATGKRVFLMAPIHHHFEKKGWAEPQVVIRFWIISLILALIGLATLKLR</sequence>
<comment type="function">
    <text evidence="1">Catalyzes the initial step of the lipid cycle reactions in the biosynthesis of the cell wall peptidoglycan: transfers peptidoglycan precursor phospho-MurNAc-pentapeptide from UDP-MurNAc-pentapeptide onto the lipid carrier undecaprenyl phosphate, yielding undecaprenyl-pyrophosphoryl-MurNAc-pentapeptide, known as lipid I.</text>
</comment>
<comment type="catalytic activity">
    <reaction evidence="1">
        <text>UDP-N-acetyl-alpha-D-muramoyl-L-alanyl-gamma-D-glutamyl-meso-2,6-diaminopimeloyl-D-alanyl-D-alanine + di-trans,octa-cis-undecaprenyl phosphate = di-trans,octa-cis-undecaprenyl diphospho-N-acetyl-alpha-D-muramoyl-L-alanyl-D-glutamyl-meso-2,6-diaminopimeloyl-D-alanyl-D-alanine + UMP</text>
        <dbReference type="Rhea" id="RHEA:28386"/>
        <dbReference type="ChEBI" id="CHEBI:57865"/>
        <dbReference type="ChEBI" id="CHEBI:60392"/>
        <dbReference type="ChEBI" id="CHEBI:61386"/>
        <dbReference type="ChEBI" id="CHEBI:61387"/>
        <dbReference type="EC" id="2.7.8.13"/>
    </reaction>
</comment>
<comment type="cofactor">
    <cofactor evidence="1">
        <name>Mg(2+)</name>
        <dbReference type="ChEBI" id="CHEBI:18420"/>
    </cofactor>
</comment>
<comment type="pathway">
    <text evidence="1">Cell wall biogenesis; peptidoglycan biosynthesis.</text>
</comment>
<comment type="subcellular location">
    <subcellularLocation>
        <location evidence="1">Cell inner membrane</location>
        <topology evidence="1">Multi-pass membrane protein</topology>
    </subcellularLocation>
</comment>
<comment type="similarity">
    <text evidence="1">Belongs to the glycosyltransferase 4 family. MraY subfamily.</text>
</comment>
<protein>
    <recommendedName>
        <fullName evidence="1">Phospho-N-acetylmuramoyl-pentapeptide-transferase</fullName>
        <ecNumber evidence="1">2.7.8.13</ecNumber>
    </recommendedName>
    <alternativeName>
        <fullName evidence="1">UDP-MurNAc-pentapeptide phosphotransferase</fullName>
    </alternativeName>
</protein>
<name>MRAY_JANSC</name>
<evidence type="ECO:0000255" key="1">
    <source>
        <dbReference type="HAMAP-Rule" id="MF_00038"/>
    </source>
</evidence>
<accession>Q28NN1</accession>
<proteinExistence type="inferred from homology"/>
<gene>
    <name evidence="1" type="primary">mraY</name>
    <name type="ordered locus">Jann_2764</name>
</gene>
<feature type="chain" id="PRO_1000002993" description="Phospho-N-acetylmuramoyl-pentapeptide-transferase">
    <location>
        <begin position="1"/>
        <end position="359"/>
    </location>
</feature>
<feature type="transmembrane region" description="Helical" evidence="1">
    <location>
        <begin position="27"/>
        <end position="47"/>
    </location>
</feature>
<feature type="transmembrane region" description="Helical" evidence="1">
    <location>
        <begin position="70"/>
        <end position="90"/>
    </location>
</feature>
<feature type="transmembrane region" description="Helical" evidence="1">
    <location>
        <begin position="97"/>
        <end position="117"/>
    </location>
</feature>
<feature type="transmembrane region" description="Helical" evidence="1">
    <location>
        <begin position="133"/>
        <end position="153"/>
    </location>
</feature>
<feature type="transmembrane region" description="Helical" evidence="1">
    <location>
        <begin position="167"/>
        <end position="187"/>
    </location>
</feature>
<feature type="transmembrane region" description="Helical" evidence="1">
    <location>
        <begin position="198"/>
        <end position="218"/>
    </location>
</feature>
<feature type="transmembrane region" description="Helical" evidence="1">
    <location>
        <begin position="238"/>
        <end position="258"/>
    </location>
</feature>
<feature type="transmembrane region" description="Helical" evidence="1">
    <location>
        <begin position="261"/>
        <end position="281"/>
    </location>
</feature>
<feature type="transmembrane region" description="Helical" evidence="1">
    <location>
        <begin position="287"/>
        <end position="307"/>
    </location>
</feature>
<feature type="transmembrane region" description="Helical" evidence="1">
    <location>
        <begin position="336"/>
        <end position="356"/>
    </location>
</feature>
<organism>
    <name type="scientific">Jannaschia sp. (strain CCS1)</name>
    <dbReference type="NCBI Taxonomy" id="290400"/>
    <lineage>
        <taxon>Bacteria</taxon>
        <taxon>Pseudomonadati</taxon>
        <taxon>Pseudomonadota</taxon>
        <taxon>Alphaproteobacteria</taxon>
        <taxon>Rhodobacterales</taxon>
        <taxon>Roseobacteraceae</taxon>
        <taxon>Jannaschia</taxon>
    </lineage>
</organism>
<reference key="1">
    <citation type="submission" date="2006-02" db="EMBL/GenBank/DDBJ databases">
        <title>Complete sequence of chromosome of Jannaschia sp. CCS1.</title>
        <authorList>
            <consortium name="US DOE Joint Genome Institute"/>
            <person name="Copeland A."/>
            <person name="Lucas S."/>
            <person name="Lapidus A."/>
            <person name="Barry K."/>
            <person name="Detter J.C."/>
            <person name="Glavina del Rio T."/>
            <person name="Hammon N."/>
            <person name="Israni S."/>
            <person name="Pitluck S."/>
            <person name="Brettin T."/>
            <person name="Bruce D."/>
            <person name="Han C."/>
            <person name="Tapia R."/>
            <person name="Gilna P."/>
            <person name="Chertkov O."/>
            <person name="Saunders E."/>
            <person name="Schmutz J."/>
            <person name="Larimer F."/>
            <person name="Land M."/>
            <person name="Kyrpides N."/>
            <person name="Lykidis A."/>
            <person name="Moran M.A."/>
            <person name="Belas R."/>
            <person name="Ye W."/>
            <person name="Buchan A."/>
            <person name="Gonzalez J.M."/>
            <person name="Schell M.A."/>
            <person name="Richardson P."/>
        </authorList>
    </citation>
    <scope>NUCLEOTIDE SEQUENCE [LARGE SCALE GENOMIC DNA]</scope>
    <source>
        <strain>CCS1</strain>
    </source>
</reference>
<keyword id="KW-0131">Cell cycle</keyword>
<keyword id="KW-0132">Cell division</keyword>
<keyword id="KW-0997">Cell inner membrane</keyword>
<keyword id="KW-1003">Cell membrane</keyword>
<keyword id="KW-0133">Cell shape</keyword>
<keyword id="KW-0961">Cell wall biogenesis/degradation</keyword>
<keyword id="KW-0460">Magnesium</keyword>
<keyword id="KW-0472">Membrane</keyword>
<keyword id="KW-0479">Metal-binding</keyword>
<keyword id="KW-0573">Peptidoglycan synthesis</keyword>
<keyword id="KW-1185">Reference proteome</keyword>
<keyword id="KW-0808">Transferase</keyword>
<keyword id="KW-0812">Transmembrane</keyword>
<keyword id="KW-1133">Transmembrane helix</keyword>